<feature type="chain" id="PRO_0000222728" description="Protein VP6">
    <location>
        <begin position="1"/>
        <end position="369"/>
    </location>
</feature>
<feature type="region of interest" description="Disordered" evidence="1">
    <location>
        <begin position="17"/>
        <end position="169"/>
    </location>
</feature>
<feature type="region of interest" description="Disordered" evidence="1">
    <location>
        <begin position="184"/>
        <end position="208"/>
    </location>
</feature>
<feature type="compositionally biased region" description="Basic and acidic residues" evidence="1">
    <location>
        <begin position="29"/>
        <end position="68"/>
    </location>
</feature>
<feature type="compositionally biased region" description="Gly residues" evidence="1">
    <location>
        <begin position="92"/>
        <end position="111"/>
    </location>
</feature>
<feature type="compositionally biased region" description="Basic and acidic residues" evidence="1">
    <location>
        <begin position="137"/>
        <end position="148"/>
    </location>
</feature>
<feature type="compositionally biased region" description="Basic and acidic residues" evidence="1">
    <location>
        <begin position="196"/>
        <end position="208"/>
    </location>
</feature>
<sequence>MSSALLLAPGDLIEKAKRELEQRSITPLLREKGSTEAKSKLKEDGEKKNKSEKEENKIHDDRRVESQKSEGGGPADCQRGAGSRGANCATSTGGGDGSAGARTGIGGGGVGRVDSRSGGRGGQGAASDGKGVGKSKTGADRVANDDATRNVGSSEVSPGGITSGGLQGRGGLVAKSGECGGESLDRIGGCSGNSKTEGEEAKAGGGDRRIGGLATQEIADFVKKKIGVEVQVFSKGMSNLFTVDKSLLKRGGLGREDILHQSDIVKEIRASDKKVKIIPLSTVKRMIAEFGGTEEDEIKAVQTQSSSIRYISNRMEDVSRAKAMFTAPTGDEGWKEVAKAATQRPNIMAYVHEGEGDGLKELLHLIDHI</sequence>
<dbReference type="EMBL" id="U33000">
    <property type="protein sequence ID" value="AAB17107.1"/>
    <property type="molecule type" value="Genomic_RNA"/>
</dbReference>
<dbReference type="SMR" id="Q64913"/>
<dbReference type="KEGG" id="vg:2930879"/>
<dbReference type="Proteomes" id="UP000201896">
    <property type="component" value="Genome"/>
</dbReference>
<dbReference type="GO" id="GO:0039625">
    <property type="term" value="C:viral inner capsid"/>
    <property type="evidence" value="ECO:0007669"/>
    <property type="project" value="UniProtKB-KW"/>
</dbReference>
<dbReference type="GO" id="GO:0005198">
    <property type="term" value="F:structural molecule activity"/>
    <property type="evidence" value="ECO:0007669"/>
    <property type="project" value="InterPro"/>
</dbReference>
<dbReference type="InterPro" id="IPR001399">
    <property type="entry name" value="Orbi_VP6"/>
</dbReference>
<dbReference type="Pfam" id="PF01516">
    <property type="entry name" value="Orbi_VP6"/>
    <property type="match status" value="1"/>
</dbReference>
<evidence type="ECO:0000256" key="1">
    <source>
        <dbReference type="SAM" id="MobiDB-lite"/>
    </source>
</evidence>
<evidence type="ECO:0000305" key="2"/>
<proteinExistence type="inferred from homology"/>
<organism>
    <name type="scientific">African horse sickness virus</name>
    <name type="common">AHSV</name>
    <name type="synonym">Orbivirus alphaequi</name>
    <dbReference type="NCBI Taxonomy" id="40050"/>
    <lineage>
        <taxon>Viruses</taxon>
        <taxon>Riboviria</taxon>
        <taxon>Orthornavirae</taxon>
        <taxon>Duplornaviricota</taxon>
        <taxon>Resentoviricetes</taxon>
        <taxon>Reovirales</taxon>
        <taxon>Sedoreoviridae</taxon>
        <taxon>Orbivirus</taxon>
    </lineage>
</organism>
<name>VP6_AHSV</name>
<protein>
    <recommendedName>
        <fullName>Protein VP6</fullName>
    </recommendedName>
    <alternativeName>
        <fullName>Minor inner core protein VP6</fullName>
    </alternativeName>
</protein>
<gene>
    <name type="primary">Segment-9</name>
</gene>
<keyword id="KW-0167">Capsid protein</keyword>
<keyword id="KW-1153">Inner capsid protein</keyword>
<keyword id="KW-0946">Virion</keyword>
<accession>Q64913</accession>
<reference key="1">
    <citation type="journal article" date="1996" name="J. Gen. Virol.">
        <title>Characterization of the gene encoding core protein VP6 of two African horsesickness virus serotypes.</title>
        <authorList>
            <person name="Turnbull P.J."/>
            <person name="Cormack S.B."/>
            <person name="Huismans H."/>
        </authorList>
    </citation>
    <scope>NUCLEOTIDE SEQUENCE [GENOMIC RNA]</scope>
    <source>
        <strain>Serotype 6</strain>
    </source>
</reference>
<comment type="subcellular location">
    <subcellularLocation>
        <location evidence="2">Virion</location>
    </subcellularLocation>
</comment>
<comment type="similarity">
    <text evidence="2">Belongs to the orbivirus VP6 family.</text>
</comment>